<dbReference type="EMBL" id="CP000660">
    <property type="protein sequence ID" value="ABP51161.1"/>
    <property type="molecule type" value="Genomic_DNA"/>
</dbReference>
<dbReference type="RefSeq" id="WP_011901068.1">
    <property type="nucleotide sequence ID" value="NC_009376.1"/>
</dbReference>
<dbReference type="SMR" id="A4WL94"/>
<dbReference type="STRING" id="340102.Pars_1607"/>
<dbReference type="GeneID" id="5054074"/>
<dbReference type="KEGG" id="pas:Pars_1607"/>
<dbReference type="HOGENOM" id="CLU_177460_0_1_2"/>
<dbReference type="OrthoDB" id="191241at2157"/>
<dbReference type="Proteomes" id="UP000001567">
    <property type="component" value="Chromosome"/>
</dbReference>
<dbReference type="GO" id="GO:1990904">
    <property type="term" value="C:ribonucleoprotein complex"/>
    <property type="evidence" value="ECO:0007669"/>
    <property type="project" value="UniProtKB-KW"/>
</dbReference>
<dbReference type="GO" id="GO:0005840">
    <property type="term" value="C:ribosome"/>
    <property type="evidence" value="ECO:0007669"/>
    <property type="project" value="UniProtKB-KW"/>
</dbReference>
<dbReference type="GO" id="GO:0070180">
    <property type="term" value="F:large ribosomal subunit rRNA binding"/>
    <property type="evidence" value="ECO:0007669"/>
    <property type="project" value="UniProtKB-UniRule"/>
</dbReference>
<dbReference type="GO" id="GO:0003735">
    <property type="term" value="F:structural constituent of ribosome"/>
    <property type="evidence" value="ECO:0007669"/>
    <property type="project" value="InterPro"/>
</dbReference>
<dbReference type="GO" id="GO:0006412">
    <property type="term" value="P:translation"/>
    <property type="evidence" value="ECO:0007669"/>
    <property type="project" value="UniProtKB-UniRule"/>
</dbReference>
<dbReference type="Gene3D" id="3.10.20.10">
    <property type="match status" value="1"/>
</dbReference>
<dbReference type="HAMAP" id="MF_00273">
    <property type="entry name" value="Ribosomal_eL20"/>
    <property type="match status" value="1"/>
</dbReference>
<dbReference type="InterPro" id="IPR028877">
    <property type="entry name" value="Ribosomal_eL20"/>
</dbReference>
<dbReference type="InterPro" id="IPR023573">
    <property type="entry name" value="Ribosomal_eL20_dom"/>
</dbReference>
<dbReference type="NCBIfam" id="NF001981">
    <property type="entry name" value="PRK00773.1-1"/>
    <property type="match status" value="1"/>
</dbReference>
<dbReference type="Pfam" id="PF01775">
    <property type="entry name" value="Ribosomal_L18A"/>
    <property type="match status" value="1"/>
</dbReference>
<dbReference type="SUPFAM" id="SSF160374">
    <property type="entry name" value="RplX-like"/>
    <property type="match status" value="1"/>
</dbReference>
<organism>
    <name type="scientific">Pyrobaculum arsenaticum (strain DSM 13514 / JCM 11321 / PZ6)</name>
    <dbReference type="NCBI Taxonomy" id="340102"/>
    <lineage>
        <taxon>Archaea</taxon>
        <taxon>Thermoproteota</taxon>
        <taxon>Thermoprotei</taxon>
        <taxon>Thermoproteales</taxon>
        <taxon>Thermoproteaceae</taxon>
        <taxon>Pyrobaculum</taxon>
    </lineage>
</organism>
<sequence>MPRIYKIVGDTTTGMKFRIEVVAEKPYDAIEKAYSLIGSRHKLSRMQIRIREVVPISPEEARSEHVKILMAVDKIYKY</sequence>
<accession>A4WL94</accession>
<comment type="subunit">
    <text evidence="1">Part of the 50S ribosomal subunit. Binds 23S rRNA.</text>
</comment>
<comment type="similarity">
    <text evidence="1">Belongs to the eukaryotic ribosomal protein eL20 family.</text>
</comment>
<keyword id="KW-0687">Ribonucleoprotein</keyword>
<keyword id="KW-0689">Ribosomal protein</keyword>
<keyword id="KW-0694">RNA-binding</keyword>
<keyword id="KW-0699">rRNA-binding</keyword>
<reference key="1">
    <citation type="submission" date="2007-04" db="EMBL/GenBank/DDBJ databases">
        <title>Complete sequence of Pyrobaculum arsenaticum DSM 13514.</title>
        <authorList>
            <consortium name="US DOE Joint Genome Institute"/>
            <person name="Copeland A."/>
            <person name="Lucas S."/>
            <person name="Lapidus A."/>
            <person name="Barry K."/>
            <person name="Glavina del Rio T."/>
            <person name="Dalin E."/>
            <person name="Tice H."/>
            <person name="Pitluck S."/>
            <person name="Chain P."/>
            <person name="Malfatti S."/>
            <person name="Shin M."/>
            <person name="Vergez L."/>
            <person name="Schmutz J."/>
            <person name="Larimer F."/>
            <person name="Land M."/>
            <person name="Hauser L."/>
            <person name="Kyrpides N."/>
            <person name="Mikhailova N."/>
            <person name="Cozen A.E."/>
            <person name="Fitz-Gibbon S.T."/>
            <person name="House C.H."/>
            <person name="Saltikov C."/>
            <person name="Lowe T.M."/>
            <person name="Richardson P."/>
        </authorList>
    </citation>
    <scope>NUCLEOTIDE SEQUENCE [LARGE SCALE GENOMIC DNA]</scope>
    <source>
        <strain>ATCC 700994 / DSM 13514 / JCM 11321 / PZ6</strain>
    </source>
</reference>
<protein>
    <recommendedName>
        <fullName evidence="1">Large ribosomal subunit protein eL20</fullName>
    </recommendedName>
    <alternativeName>
        <fullName evidence="2">50S ribosomal protein L18Ae</fullName>
    </alternativeName>
    <alternativeName>
        <fullName evidence="1">50S ribosomal protein L20e</fullName>
    </alternativeName>
    <alternativeName>
        <fullName evidence="1">50S ribosomal protein LX</fullName>
    </alternativeName>
</protein>
<name>RL18A_PYRAR</name>
<gene>
    <name evidence="1" type="primary">rpl18a</name>
    <name evidence="1" type="synonym">rpl20e</name>
    <name evidence="1" type="synonym">rplX</name>
    <name type="ordered locus">Pars_1607</name>
</gene>
<proteinExistence type="inferred from homology"/>
<feature type="chain" id="PRO_1000003670" description="Large ribosomal subunit protein eL20">
    <location>
        <begin position="1"/>
        <end position="78"/>
    </location>
</feature>
<evidence type="ECO:0000255" key="1">
    <source>
        <dbReference type="HAMAP-Rule" id="MF_00273"/>
    </source>
</evidence>
<evidence type="ECO:0000305" key="2"/>